<dbReference type="EMBL" id="AE017220">
    <property type="protein sequence ID" value="AAX65676.1"/>
    <property type="molecule type" value="Genomic_DNA"/>
</dbReference>
<dbReference type="RefSeq" id="WP_000804703.1">
    <property type="nucleotide sequence ID" value="NC_006905.1"/>
</dbReference>
<dbReference type="SMR" id="Q57NN5"/>
<dbReference type="KEGG" id="sec:SCH_1770"/>
<dbReference type="HOGENOM" id="CLU_036856_0_1_6"/>
<dbReference type="Proteomes" id="UP000000538">
    <property type="component" value="Chromosome"/>
</dbReference>
<dbReference type="GO" id="GO:0005737">
    <property type="term" value="C:cytoplasm"/>
    <property type="evidence" value="ECO:0007669"/>
    <property type="project" value="UniProtKB-SubCell"/>
</dbReference>
<dbReference type="GO" id="GO:0016149">
    <property type="term" value="F:translation release factor activity, codon specific"/>
    <property type="evidence" value="ECO:0007669"/>
    <property type="project" value="UniProtKB-UniRule"/>
</dbReference>
<dbReference type="FunFam" id="3.30.160.20:FF:000004">
    <property type="entry name" value="Peptide chain release factor 1"/>
    <property type="match status" value="1"/>
</dbReference>
<dbReference type="FunFam" id="3.30.70.1660:FF:000002">
    <property type="entry name" value="Peptide chain release factor 1"/>
    <property type="match status" value="1"/>
</dbReference>
<dbReference type="FunFam" id="3.30.70.1660:FF:000004">
    <property type="entry name" value="Peptide chain release factor 1"/>
    <property type="match status" value="1"/>
</dbReference>
<dbReference type="Gene3D" id="3.30.160.20">
    <property type="match status" value="1"/>
</dbReference>
<dbReference type="Gene3D" id="3.30.70.1660">
    <property type="match status" value="2"/>
</dbReference>
<dbReference type="Gene3D" id="6.10.140.1950">
    <property type="match status" value="1"/>
</dbReference>
<dbReference type="HAMAP" id="MF_00093">
    <property type="entry name" value="Rel_fac_1"/>
    <property type="match status" value="1"/>
</dbReference>
<dbReference type="InterPro" id="IPR005139">
    <property type="entry name" value="PCRF"/>
</dbReference>
<dbReference type="InterPro" id="IPR000352">
    <property type="entry name" value="Pep_chain_release_fac_I"/>
</dbReference>
<dbReference type="InterPro" id="IPR045853">
    <property type="entry name" value="Pep_chain_release_fac_I_sf"/>
</dbReference>
<dbReference type="InterPro" id="IPR050057">
    <property type="entry name" value="Prokaryotic/Mito_RF"/>
</dbReference>
<dbReference type="InterPro" id="IPR004373">
    <property type="entry name" value="RF-1"/>
</dbReference>
<dbReference type="NCBIfam" id="TIGR00019">
    <property type="entry name" value="prfA"/>
    <property type="match status" value="1"/>
</dbReference>
<dbReference type="NCBIfam" id="NF001859">
    <property type="entry name" value="PRK00591.1"/>
    <property type="match status" value="1"/>
</dbReference>
<dbReference type="PANTHER" id="PTHR43804">
    <property type="entry name" value="LD18447P"/>
    <property type="match status" value="1"/>
</dbReference>
<dbReference type="PANTHER" id="PTHR43804:SF7">
    <property type="entry name" value="LD18447P"/>
    <property type="match status" value="1"/>
</dbReference>
<dbReference type="Pfam" id="PF03462">
    <property type="entry name" value="PCRF"/>
    <property type="match status" value="1"/>
</dbReference>
<dbReference type="Pfam" id="PF00472">
    <property type="entry name" value="RF-1"/>
    <property type="match status" value="1"/>
</dbReference>
<dbReference type="SMART" id="SM00937">
    <property type="entry name" value="PCRF"/>
    <property type="match status" value="1"/>
</dbReference>
<dbReference type="SUPFAM" id="SSF75620">
    <property type="entry name" value="Release factor"/>
    <property type="match status" value="1"/>
</dbReference>
<dbReference type="PROSITE" id="PS00745">
    <property type="entry name" value="RF_PROK_I"/>
    <property type="match status" value="1"/>
</dbReference>
<protein>
    <recommendedName>
        <fullName evidence="1">Peptide chain release factor 1</fullName>
        <shortName evidence="1">RF-1</shortName>
    </recommendedName>
</protein>
<accession>Q57NN5</accession>
<comment type="function">
    <text evidence="1">Peptide chain release factor 1 directs the termination of translation in response to the peptide chain termination codons UAG and UAA.</text>
</comment>
<comment type="subcellular location">
    <subcellularLocation>
        <location evidence="1">Cytoplasm</location>
    </subcellularLocation>
</comment>
<comment type="PTM">
    <text evidence="1">Methylated by PrmC. Methylation increases the termination efficiency of RF1.</text>
</comment>
<comment type="similarity">
    <text evidence="1">Belongs to the prokaryotic/mitochondrial release factor family.</text>
</comment>
<proteinExistence type="inferred from homology"/>
<keyword id="KW-0963">Cytoplasm</keyword>
<keyword id="KW-0488">Methylation</keyword>
<keyword id="KW-0648">Protein biosynthesis</keyword>
<evidence type="ECO:0000255" key="1">
    <source>
        <dbReference type="HAMAP-Rule" id="MF_00093"/>
    </source>
</evidence>
<evidence type="ECO:0000256" key="2">
    <source>
        <dbReference type="SAM" id="MobiDB-lite"/>
    </source>
</evidence>
<gene>
    <name evidence="1" type="primary">prfA</name>
    <name type="ordered locus">SCH_1770</name>
</gene>
<organism>
    <name type="scientific">Salmonella choleraesuis (strain SC-B67)</name>
    <dbReference type="NCBI Taxonomy" id="321314"/>
    <lineage>
        <taxon>Bacteria</taxon>
        <taxon>Pseudomonadati</taxon>
        <taxon>Pseudomonadota</taxon>
        <taxon>Gammaproteobacteria</taxon>
        <taxon>Enterobacterales</taxon>
        <taxon>Enterobacteriaceae</taxon>
        <taxon>Salmonella</taxon>
    </lineage>
</organism>
<name>RF1_SALCH</name>
<sequence>MKPSIVAKLEALHERHEEVQALLGDAGIIADQDRFRALSREYAQLSDVSRCFTDWQQVQDDIETAQMMLDDPEMREMAQEELREAKEKSEQLEQQLQVLLLPKDPDDERNAFLEVRAGTGGDEAALFAGDLFRMYSRYAEARRWRVEIMSMSEGEHGGYKEIIAKISGDGVYGRLKFESGGHRVQRVPATESQGRIHTSACTVAVMPELPEAELPDINPADLRIDTFRSSGAGGQHVNTTDSAIRITHLPTGIVVECQDERSQHKNKAKALSVLGARIHAAETAKRQQAEASTRRNLLGSGDRSDRNRTYNFPQGRVTDHRINLTLYRLDETMEGKLDMLIEPIVQEHQADLLAALSEQE</sequence>
<feature type="chain" id="PRO_0000263345" description="Peptide chain release factor 1">
    <location>
        <begin position="1"/>
        <end position="360"/>
    </location>
</feature>
<feature type="region of interest" description="Disordered" evidence="2">
    <location>
        <begin position="284"/>
        <end position="313"/>
    </location>
</feature>
<feature type="modified residue" description="N5-methylglutamine" evidence="1">
    <location>
        <position position="235"/>
    </location>
</feature>
<reference key="1">
    <citation type="journal article" date="2005" name="Nucleic Acids Res.">
        <title>The genome sequence of Salmonella enterica serovar Choleraesuis, a highly invasive and resistant zoonotic pathogen.</title>
        <authorList>
            <person name="Chiu C.-H."/>
            <person name="Tang P."/>
            <person name="Chu C."/>
            <person name="Hu S."/>
            <person name="Bao Q."/>
            <person name="Yu J."/>
            <person name="Chou Y.-Y."/>
            <person name="Wang H.-S."/>
            <person name="Lee Y.-S."/>
        </authorList>
    </citation>
    <scope>NUCLEOTIDE SEQUENCE [LARGE SCALE GENOMIC DNA]</scope>
    <source>
        <strain>SC-B67</strain>
    </source>
</reference>